<feature type="chain" id="PRO_0000409412" description="Tethering factor for nuclear proteasome STS1">
    <location>
        <begin position="1"/>
        <end position="333"/>
    </location>
</feature>
<feature type="region of interest" description="Disordered" evidence="2">
    <location>
        <begin position="1"/>
        <end position="76"/>
    </location>
</feature>
<feature type="compositionally biased region" description="Polar residues" evidence="2">
    <location>
        <begin position="14"/>
        <end position="36"/>
    </location>
</feature>
<feature type="compositionally biased region" description="Polar residues" evidence="2">
    <location>
        <begin position="47"/>
        <end position="58"/>
    </location>
</feature>
<keyword id="KW-0963">Cytoplasm</keyword>
<keyword id="KW-0539">Nucleus</keyword>
<keyword id="KW-0653">Protein transport</keyword>
<keyword id="KW-1185">Reference proteome</keyword>
<keyword id="KW-0813">Transport</keyword>
<sequence length="333" mass="37911">MSQSVGFEWGFRPSVSSGENLNMGQEQTSSTESNDISNDHERAHGHIQSSQHRLTHGTSSRRISKPRIKRRYTEEDVSMNGPVSQVVQRVSKKKPVYRNYIQGQPLPFPRSVELMDKQLLQSVLLSLVREHPEIQHSLFSKVQSISFNKEQYVKVLKEKLTQVYEDIPYSKYNQSSDGLLNDYAFGRMKASIMEFLNCVIDFLLSSIPPQSDSVLQSLKFLNCSTDFLNQLPDFETASNNYYKNMCFEQISEIWCSCIQFASTDLSFMSVVSNLEDWESVLHTLNGRSNNRLQKPLELIGTIKNSAAMMSQDRNGHPLSQTQPSTVGFLNISS</sequence>
<accession>Q6CQN1</accession>
<dbReference type="EMBL" id="CR382124">
    <property type="protein sequence ID" value="CAH00854.1"/>
    <property type="molecule type" value="Genomic_DNA"/>
</dbReference>
<dbReference type="RefSeq" id="XP_453758.1">
    <property type="nucleotide sequence ID" value="XM_453758.1"/>
</dbReference>
<dbReference type="SMR" id="Q6CQN1"/>
<dbReference type="FunCoup" id="Q6CQN1">
    <property type="interactions" value="18"/>
</dbReference>
<dbReference type="STRING" id="284590.Q6CQN1"/>
<dbReference type="PaxDb" id="284590-Q6CQN1"/>
<dbReference type="KEGG" id="kla:KLLA0_D15851g"/>
<dbReference type="eggNOG" id="ENOG502RNK4">
    <property type="taxonomic scope" value="Eukaryota"/>
</dbReference>
<dbReference type="HOGENOM" id="CLU_054606_1_0_1"/>
<dbReference type="InParanoid" id="Q6CQN1"/>
<dbReference type="OMA" id="DYTPHFL"/>
<dbReference type="Proteomes" id="UP000000598">
    <property type="component" value="Chromosome D"/>
</dbReference>
<dbReference type="GO" id="GO:0005737">
    <property type="term" value="C:cytoplasm"/>
    <property type="evidence" value="ECO:0007669"/>
    <property type="project" value="UniProtKB-SubCell"/>
</dbReference>
<dbReference type="GO" id="GO:0031965">
    <property type="term" value="C:nuclear membrane"/>
    <property type="evidence" value="ECO:0007669"/>
    <property type="project" value="TreeGrafter"/>
</dbReference>
<dbReference type="GO" id="GO:0070628">
    <property type="term" value="F:proteasome binding"/>
    <property type="evidence" value="ECO:0007669"/>
    <property type="project" value="TreeGrafter"/>
</dbReference>
<dbReference type="GO" id="GO:0071630">
    <property type="term" value="P:nuclear protein quality control by the ubiquitin-proteasome system"/>
    <property type="evidence" value="ECO:0007669"/>
    <property type="project" value="InterPro"/>
</dbReference>
<dbReference type="GO" id="GO:0031144">
    <property type="term" value="P:proteasome localization"/>
    <property type="evidence" value="ECO:0007669"/>
    <property type="project" value="InterPro"/>
</dbReference>
<dbReference type="GO" id="GO:0015031">
    <property type="term" value="P:protein transport"/>
    <property type="evidence" value="ECO:0007669"/>
    <property type="project" value="UniProtKB-KW"/>
</dbReference>
<dbReference type="Gene3D" id="1.20.58.1590">
    <property type="entry name" value="Tethering factor for nuclear proteasome Cut8/Sts1"/>
    <property type="match status" value="1"/>
</dbReference>
<dbReference type="InterPro" id="IPR013868">
    <property type="entry name" value="Cut8/Sts1_fam"/>
</dbReference>
<dbReference type="InterPro" id="IPR038422">
    <property type="entry name" value="Cut8/Sts1_sf"/>
</dbReference>
<dbReference type="PANTHER" id="PTHR28032">
    <property type="entry name" value="FI02826P"/>
    <property type="match status" value="1"/>
</dbReference>
<dbReference type="PANTHER" id="PTHR28032:SF1">
    <property type="entry name" value="FI02826P"/>
    <property type="match status" value="1"/>
</dbReference>
<dbReference type="Pfam" id="PF08559">
    <property type="entry name" value="Cut8"/>
    <property type="match status" value="1"/>
</dbReference>
<name>STS1_KLULA</name>
<gene>
    <name type="primary">STS1</name>
    <name type="ordered locus">KLLA0D15851g</name>
</gene>
<reference key="1">
    <citation type="journal article" date="2004" name="Nature">
        <title>Genome evolution in yeasts.</title>
        <authorList>
            <person name="Dujon B."/>
            <person name="Sherman D."/>
            <person name="Fischer G."/>
            <person name="Durrens P."/>
            <person name="Casaregola S."/>
            <person name="Lafontaine I."/>
            <person name="de Montigny J."/>
            <person name="Marck C."/>
            <person name="Neuveglise C."/>
            <person name="Talla E."/>
            <person name="Goffard N."/>
            <person name="Frangeul L."/>
            <person name="Aigle M."/>
            <person name="Anthouard V."/>
            <person name="Babour A."/>
            <person name="Barbe V."/>
            <person name="Barnay S."/>
            <person name="Blanchin S."/>
            <person name="Beckerich J.-M."/>
            <person name="Beyne E."/>
            <person name="Bleykasten C."/>
            <person name="Boisrame A."/>
            <person name="Boyer J."/>
            <person name="Cattolico L."/>
            <person name="Confanioleri F."/>
            <person name="de Daruvar A."/>
            <person name="Despons L."/>
            <person name="Fabre E."/>
            <person name="Fairhead C."/>
            <person name="Ferry-Dumazet H."/>
            <person name="Groppi A."/>
            <person name="Hantraye F."/>
            <person name="Hennequin C."/>
            <person name="Jauniaux N."/>
            <person name="Joyet P."/>
            <person name="Kachouri R."/>
            <person name="Kerrest A."/>
            <person name="Koszul R."/>
            <person name="Lemaire M."/>
            <person name="Lesur I."/>
            <person name="Ma L."/>
            <person name="Muller H."/>
            <person name="Nicaud J.-M."/>
            <person name="Nikolski M."/>
            <person name="Oztas S."/>
            <person name="Ozier-Kalogeropoulos O."/>
            <person name="Pellenz S."/>
            <person name="Potier S."/>
            <person name="Richard G.-F."/>
            <person name="Straub M.-L."/>
            <person name="Suleau A."/>
            <person name="Swennen D."/>
            <person name="Tekaia F."/>
            <person name="Wesolowski-Louvel M."/>
            <person name="Westhof E."/>
            <person name="Wirth B."/>
            <person name="Zeniou-Meyer M."/>
            <person name="Zivanovic Y."/>
            <person name="Bolotin-Fukuhara M."/>
            <person name="Thierry A."/>
            <person name="Bouchier C."/>
            <person name="Caudron B."/>
            <person name="Scarpelli C."/>
            <person name="Gaillardin C."/>
            <person name="Weissenbach J."/>
            <person name="Wincker P."/>
            <person name="Souciet J.-L."/>
        </authorList>
    </citation>
    <scope>NUCLEOTIDE SEQUENCE [LARGE SCALE GENOMIC DNA]</scope>
    <source>
        <strain>ATCC 8585 / CBS 2359 / DSM 70799 / NBRC 1267 / NRRL Y-1140 / WM37</strain>
    </source>
</reference>
<comment type="function">
    <text evidence="1">Involved in ubiquitin-mediated protein degradation. Regulatory factor in the ubiquitin/proteasome pathway that controls the turnover of proteasome substrates. Targets proteasomes to the nucleus and facilitates the degradation of nuclear proteins (By similarity).</text>
</comment>
<comment type="subunit">
    <text evidence="1">Binds the proteasome.</text>
</comment>
<comment type="subcellular location">
    <subcellularLocation>
        <location evidence="1">Cytoplasm</location>
    </subcellularLocation>
    <subcellularLocation>
        <location evidence="1">Nucleus</location>
    </subcellularLocation>
</comment>
<comment type="similarity">
    <text evidence="3">Belongs to the cut8/STS1 family.</text>
</comment>
<evidence type="ECO:0000250" key="1"/>
<evidence type="ECO:0000256" key="2">
    <source>
        <dbReference type="SAM" id="MobiDB-lite"/>
    </source>
</evidence>
<evidence type="ECO:0000305" key="3"/>
<organism>
    <name type="scientific">Kluyveromyces lactis (strain ATCC 8585 / CBS 2359 / DSM 70799 / NBRC 1267 / NRRL Y-1140 / WM37)</name>
    <name type="common">Yeast</name>
    <name type="synonym">Candida sphaerica</name>
    <dbReference type="NCBI Taxonomy" id="284590"/>
    <lineage>
        <taxon>Eukaryota</taxon>
        <taxon>Fungi</taxon>
        <taxon>Dikarya</taxon>
        <taxon>Ascomycota</taxon>
        <taxon>Saccharomycotina</taxon>
        <taxon>Saccharomycetes</taxon>
        <taxon>Saccharomycetales</taxon>
        <taxon>Saccharomycetaceae</taxon>
        <taxon>Kluyveromyces</taxon>
    </lineage>
</organism>
<protein>
    <recommendedName>
        <fullName>Tethering factor for nuclear proteasome STS1</fullName>
    </recommendedName>
</protein>
<proteinExistence type="inferred from homology"/>